<organism>
    <name type="scientific">Ruegeria sp. (strain TM1040)</name>
    <name type="common">Silicibacter sp.</name>
    <dbReference type="NCBI Taxonomy" id="292414"/>
    <lineage>
        <taxon>Bacteria</taxon>
        <taxon>Pseudomonadati</taxon>
        <taxon>Pseudomonadota</taxon>
        <taxon>Alphaproteobacteria</taxon>
        <taxon>Rhodobacterales</taxon>
        <taxon>Roseobacteraceae</taxon>
        <taxon>Ruegeria</taxon>
    </lineage>
</organism>
<gene>
    <name evidence="1" type="primary">atpD</name>
    <name type="ordered locus">TM1040_2086</name>
</gene>
<reference key="1">
    <citation type="submission" date="2006-05" db="EMBL/GenBank/DDBJ databases">
        <title>Complete sequence of chromosome of Silicibacter sp. TM1040.</title>
        <authorList>
            <consortium name="US DOE Joint Genome Institute"/>
            <person name="Copeland A."/>
            <person name="Lucas S."/>
            <person name="Lapidus A."/>
            <person name="Barry K."/>
            <person name="Detter J.C."/>
            <person name="Glavina del Rio T."/>
            <person name="Hammon N."/>
            <person name="Israni S."/>
            <person name="Dalin E."/>
            <person name="Tice H."/>
            <person name="Pitluck S."/>
            <person name="Brettin T."/>
            <person name="Bruce D."/>
            <person name="Han C."/>
            <person name="Tapia R."/>
            <person name="Goodwin L."/>
            <person name="Thompson L.S."/>
            <person name="Gilna P."/>
            <person name="Schmutz J."/>
            <person name="Larimer F."/>
            <person name="Land M."/>
            <person name="Hauser L."/>
            <person name="Kyrpides N."/>
            <person name="Kim E."/>
            <person name="Belas R."/>
            <person name="Moran M.A."/>
            <person name="Buchan A."/>
            <person name="Gonzalez J.M."/>
            <person name="Schell M.A."/>
            <person name="Sun F."/>
            <person name="Richardson P."/>
        </authorList>
    </citation>
    <scope>NUCLEOTIDE SEQUENCE [LARGE SCALE GENOMIC DNA]</scope>
    <source>
        <strain>TM1040</strain>
    </source>
</reference>
<feature type="chain" id="PRO_0000254378" description="ATP synthase subunit beta">
    <location>
        <begin position="1"/>
        <end position="474"/>
    </location>
</feature>
<feature type="binding site" evidence="1">
    <location>
        <begin position="151"/>
        <end position="158"/>
    </location>
    <ligand>
        <name>ATP</name>
        <dbReference type="ChEBI" id="CHEBI:30616"/>
    </ligand>
</feature>
<dbReference type="EC" id="7.1.2.2" evidence="1"/>
<dbReference type="EMBL" id="CP000377">
    <property type="protein sequence ID" value="ABF64818.1"/>
    <property type="molecule type" value="Genomic_DNA"/>
</dbReference>
<dbReference type="RefSeq" id="WP_011539410.1">
    <property type="nucleotide sequence ID" value="NC_008044.1"/>
</dbReference>
<dbReference type="SMR" id="Q1GEU8"/>
<dbReference type="STRING" id="292414.TM1040_2086"/>
<dbReference type="KEGG" id="sit:TM1040_2086"/>
<dbReference type="eggNOG" id="COG0055">
    <property type="taxonomic scope" value="Bacteria"/>
</dbReference>
<dbReference type="HOGENOM" id="CLU_022398_0_2_5"/>
<dbReference type="OrthoDB" id="9801639at2"/>
<dbReference type="Proteomes" id="UP000000636">
    <property type="component" value="Chromosome"/>
</dbReference>
<dbReference type="GO" id="GO:0005886">
    <property type="term" value="C:plasma membrane"/>
    <property type="evidence" value="ECO:0007669"/>
    <property type="project" value="UniProtKB-SubCell"/>
</dbReference>
<dbReference type="GO" id="GO:0045259">
    <property type="term" value="C:proton-transporting ATP synthase complex"/>
    <property type="evidence" value="ECO:0007669"/>
    <property type="project" value="UniProtKB-KW"/>
</dbReference>
<dbReference type="GO" id="GO:0005524">
    <property type="term" value="F:ATP binding"/>
    <property type="evidence" value="ECO:0007669"/>
    <property type="project" value="UniProtKB-UniRule"/>
</dbReference>
<dbReference type="GO" id="GO:0016887">
    <property type="term" value="F:ATP hydrolysis activity"/>
    <property type="evidence" value="ECO:0007669"/>
    <property type="project" value="InterPro"/>
</dbReference>
<dbReference type="GO" id="GO:0046933">
    <property type="term" value="F:proton-transporting ATP synthase activity, rotational mechanism"/>
    <property type="evidence" value="ECO:0007669"/>
    <property type="project" value="UniProtKB-UniRule"/>
</dbReference>
<dbReference type="CDD" id="cd18110">
    <property type="entry name" value="ATP-synt_F1_beta_C"/>
    <property type="match status" value="1"/>
</dbReference>
<dbReference type="CDD" id="cd18115">
    <property type="entry name" value="ATP-synt_F1_beta_N"/>
    <property type="match status" value="1"/>
</dbReference>
<dbReference type="CDD" id="cd01133">
    <property type="entry name" value="F1-ATPase_beta_CD"/>
    <property type="match status" value="1"/>
</dbReference>
<dbReference type="FunFam" id="1.10.1140.10:FF:000001">
    <property type="entry name" value="ATP synthase subunit beta"/>
    <property type="match status" value="1"/>
</dbReference>
<dbReference type="FunFam" id="2.40.10.170:FF:000004">
    <property type="entry name" value="ATP synthase subunit beta"/>
    <property type="match status" value="1"/>
</dbReference>
<dbReference type="FunFam" id="3.40.50.300:FF:000026">
    <property type="entry name" value="ATP synthase subunit beta"/>
    <property type="match status" value="1"/>
</dbReference>
<dbReference type="Gene3D" id="2.40.10.170">
    <property type="match status" value="1"/>
</dbReference>
<dbReference type="Gene3D" id="1.10.1140.10">
    <property type="entry name" value="Bovine Mitochondrial F1-atpase, Atp Synthase Beta Chain, Chain D, domain 3"/>
    <property type="match status" value="1"/>
</dbReference>
<dbReference type="Gene3D" id="3.40.50.300">
    <property type="entry name" value="P-loop containing nucleotide triphosphate hydrolases"/>
    <property type="match status" value="1"/>
</dbReference>
<dbReference type="HAMAP" id="MF_01347">
    <property type="entry name" value="ATP_synth_beta_bact"/>
    <property type="match status" value="1"/>
</dbReference>
<dbReference type="InterPro" id="IPR003593">
    <property type="entry name" value="AAA+_ATPase"/>
</dbReference>
<dbReference type="InterPro" id="IPR055190">
    <property type="entry name" value="ATP-synt_VA_C"/>
</dbReference>
<dbReference type="InterPro" id="IPR005722">
    <property type="entry name" value="ATP_synth_F1_bsu"/>
</dbReference>
<dbReference type="InterPro" id="IPR020003">
    <property type="entry name" value="ATPase_a/bsu_AS"/>
</dbReference>
<dbReference type="InterPro" id="IPR050053">
    <property type="entry name" value="ATPase_alpha/beta_chains"/>
</dbReference>
<dbReference type="InterPro" id="IPR004100">
    <property type="entry name" value="ATPase_F1/V1/A1_a/bsu_N"/>
</dbReference>
<dbReference type="InterPro" id="IPR036121">
    <property type="entry name" value="ATPase_F1/V1/A1_a/bsu_N_sf"/>
</dbReference>
<dbReference type="InterPro" id="IPR000194">
    <property type="entry name" value="ATPase_F1/V1/A1_a/bsu_nucl-bd"/>
</dbReference>
<dbReference type="InterPro" id="IPR024034">
    <property type="entry name" value="ATPase_F1/V1_b/a_C"/>
</dbReference>
<dbReference type="InterPro" id="IPR027417">
    <property type="entry name" value="P-loop_NTPase"/>
</dbReference>
<dbReference type="NCBIfam" id="TIGR01039">
    <property type="entry name" value="atpD"/>
    <property type="match status" value="1"/>
</dbReference>
<dbReference type="PANTHER" id="PTHR15184">
    <property type="entry name" value="ATP SYNTHASE"/>
    <property type="match status" value="1"/>
</dbReference>
<dbReference type="PANTHER" id="PTHR15184:SF71">
    <property type="entry name" value="ATP SYNTHASE SUBUNIT BETA, MITOCHONDRIAL"/>
    <property type="match status" value="1"/>
</dbReference>
<dbReference type="Pfam" id="PF00006">
    <property type="entry name" value="ATP-synt_ab"/>
    <property type="match status" value="1"/>
</dbReference>
<dbReference type="Pfam" id="PF02874">
    <property type="entry name" value="ATP-synt_ab_N"/>
    <property type="match status" value="1"/>
</dbReference>
<dbReference type="Pfam" id="PF22919">
    <property type="entry name" value="ATP-synt_VA_C"/>
    <property type="match status" value="1"/>
</dbReference>
<dbReference type="PIRSF" id="PIRSF039072">
    <property type="entry name" value="ATPase_subunit_beta"/>
    <property type="match status" value="1"/>
</dbReference>
<dbReference type="SMART" id="SM00382">
    <property type="entry name" value="AAA"/>
    <property type="match status" value="1"/>
</dbReference>
<dbReference type="SUPFAM" id="SSF47917">
    <property type="entry name" value="C-terminal domain of alpha and beta subunits of F1 ATP synthase"/>
    <property type="match status" value="1"/>
</dbReference>
<dbReference type="SUPFAM" id="SSF50615">
    <property type="entry name" value="N-terminal domain of alpha and beta subunits of F1 ATP synthase"/>
    <property type="match status" value="1"/>
</dbReference>
<dbReference type="SUPFAM" id="SSF52540">
    <property type="entry name" value="P-loop containing nucleoside triphosphate hydrolases"/>
    <property type="match status" value="1"/>
</dbReference>
<dbReference type="PROSITE" id="PS00152">
    <property type="entry name" value="ATPASE_ALPHA_BETA"/>
    <property type="match status" value="1"/>
</dbReference>
<sequence length="474" mass="50580">MANAKGKVTQIIGAVVDVQFDGELPAILNALTTDNNGKKLVLEVAQHLGENSVRTIAMDATEGLVRGQEVTDTGAPISIPVGNATLGRILNVVGEPVDEGEPIVAKETRAIHQPAPEFNDQSTESEVLVTGIKVIDLLAPYAKGGKIGLFGGAGVGKTVLIMELINNIAKVHSGYSVFAGVGERTREGNDLYHEMIESNVIKPDNLEESQVALVYGQMNEPPGARARVALTGLTLAEQFRDQSGTDVLFFVDNIFRFTQAGSEVSALLGRIPSAVGYQPTLATDMGAMQERITSTKNGSITSIQAVYVPADDLTDPAPATTFAHLDATTVLNRAISELGIYPAVDPLDSSSRLMDPQIVGEEHYKVASDVQQILQRYKSLQDIIAILGMDELSEEDKLTVARARKIQRFLSQPFDVAKVFTGSDGVQVSLEDTIASFKAVVAGEYDHLPEGAFYMVGGIDEVIAKAEKMAADAA</sequence>
<proteinExistence type="inferred from homology"/>
<evidence type="ECO:0000255" key="1">
    <source>
        <dbReference type="HAMAP-Rule" id="MF_01347"/>
    </source>
</evidence>
<comment type="function">
    <text evidence="1">Produces ATP from ADP in the presence of a proton gradient across the membrane. The catalytic sites are hosted primarily by the beta subunits.</text>
</comment>
<comment type="catalytic activity">
    <reaction evidence="1">
        <text>ATP + H2O + 4 H(+)(in) = ADP + phosphate + 5 H(+)(out)</text>
        <dbReference type="Rhea" id="RHEA:57720"/>
        <dbReference type="ChEBI" id="CHEBI:15377"/>
        <dbReference type="ChEBI" id="CHEBI:15378"/>
        <dbReference type="ChEBI" id="CHEBI:30616"/>
        <dbReference type="ChEBI" id="CHEBI:43474"/>
        <dbReference type="ChEBI" id="CHEBI:456216"/>
        <dbReference type="EC" id="7.1.2.2"/>
    </reaction>
</comment>
<comment type="subunit">
    <text evidence="1">F-type ATPases have 2 components, CF(1) - the catalytic core - and CF(0) - the membrane proton channel. CF(1) has five subunits: alpha(3), beta(3), gamma(1), delta(1), epsilon(1). CF(0) has three main subunits: a(1), b(2) and c(9-12). The alpha and beta chains form an alternating ring which encloses part of the gamma chain. CF(1) is attached to CF(0) by a central stalk formed by the gamma and epsilon chains, while a peripheral stalk is formed by the delta and b chains.</text>
</comment>
<comment type="subcellular location">
    <subcellularLocation>
        <location evidence="1">Cell inner membrane</location>
        <topology evidence="1">Peripheral membrane protein</topology>
    </subcellularLocation>
</comment>
<comment type="similarity">
    <text evidence="1">Belongs to the ATPase alpha/beta chains family.</text>
</comment>
<protein>
    <recommendedName>
        <fullName evidence="1">ATP synthase subunit beta</fullName>
        <ecNumber evidence="1">7.1.2.2</ecNumber>
    </recommendedName>
    <alternativeName>
        <fullName evidence="1">ATP synthase F1 sector subunit beta</fullName>
    </alternativeName>
    <alternativeName>
        <fullName evidence="1">F-ATPase subunit beta</fullName>
    </alternativeName>
</protein>
<keyword id="KW-0066">ATP synthesis</keyword>
<keyword id="KW-0067">ATP-binding</keyword>
<keyword id="KW-0997">Cell inner membrane</keyword>
<keyword id="KW-1003">Cell membrane</keyword>
<keyword id="KW-0139">CF(1)</keyword>
<keyword id="KW-0375">Hydrogen ion transport</keyword>
<keyword id="KW-0406">Ion transport</keyword>
<keyword id="KW-0472">Membrane</keyword>
<keyword id="KW-0547">Nucleotide-binding</keyword>
<keyword id="KW-1185">Reference proteome</keyword>
<keyword id="KW-1278">Translocase</keyword>
<keyword id="KW-0813">Transport</keyword>
<name>ATPB_RUEST</name>
<accession>Q1GEU8</accession>